<comment type="catalytic activity">
    <reaction evidence="1">
        <text>tRNA(Arg) + L-arginine + ATP = L-arginyl-tRNA(Arg) + AMP + diphosphate</text>
        <dbReference type="Rhea" id="RHEA:20301"/>
        <dbReference type="Rhea" id="RHEA-COMP:9658"/>
        <dbReference type="Rhea" id="RHEA-COMP:9673"/>
        <dbReference type="ChEBI" id="CHEBI:30616"/>
        <dbReference type="ChEBI" id="CHEBI:32682"/>
        <dbReference type="ChEBI" id="CHEBI:33019"/>
        <dbReference type="ChEBI" id="CHEBI:78442"/>
        <dbReference type="ChEBI" id="CHEBI:78513"/>
        <dbReference type="ChEBI" id="CHEBI:456215"/>
        <dbReference type="EC" id="6.1.1.19"/>
    </reaction>
</comment>
<comment type="subunit">
    <text evidence="1">Monomer.</text>
</comment>
<comment type="subcellular location">
    <subcellularLocation>
        <location evidence="1">Cytoplasm</location>
    </subcellularLocation>
</comment>
<comment type="similarity">
    <text evidence="1">Belongs to the class-I aminoacyl-tRNA synthetase family.</text>
</comment>
<accession>A1A3B6</accession>
<name>SYR_BIFAA</name>
<evidence type="ECO:0000255" key="1">
    <source>
        <dbReference type="HAMAP-Rule" id="MF_00123"/>
    </source>
</evidence>
<evidence type="ECO:0000256" key="2">
    <source>
        <dbReference type="SAM" id="MobiDB-lite"/>
    </source>
</evidence>
<feature type="chain" id="PRO_1000017991" description="Arginine--tRNA ligase">
    <location>
        <begin position="1"/>
        <end position="596"/>
    </location>
</feature>
<feature type="region of interest" description="Disordered" evidence="2">
    <location>
        <begin position="227"/>
        <end position="249"/>
    </location>
</feature>
<feature type="short sequence motif" description="'HIGH' region">
    <location>
        <begin position="135"/>
        <end position="145"/>
    </location>
</feature>
<reference key="1">
    <citation type="submission" date="2006-12" db="EMBL/GenBank/DDBJ databases">
        <title>Bifidobacterium adolescentis complete genome sequence.</title>
        <authorList>
            <person name="Suzuki T."/>
            <person name="Tsuda Y."/>
            <person name="Kanou N."/>
            <person name="Inoue T."/>
            <person name="Kumazaki K."/>
            <person name="Nagano S."/>
            <person name="Hirai S."/>
            <person name="Tanaka K."/>
            <person name="Watanabe K."/>
        </authorList>
    </citation>
    <scope>NUCLEOTIDE SEQUENCE [LARGE SCALE GENOMIC DNA]</scope>
    <source>
        <strain>ATCC 15703 / DSM 20083 / NCTC 11814 / E194a</strain>
    </source>
</reference>
<keyword id="KW-0030">Aminoacyl-tRNA synthetase</keyword>
<keyword id="KW-0067">ATP-binding</keyword>
<keyword id="KW-0963">Cytoplasm</keyword>
<keyword id="KW-0436">Ligase</keyword>
<keyword id="KW-0547">Nucleotide-binding</keyword>
<keyword id="KW-0648">Protein biosynthesis</keyword>
<keyword id="KW-1185">Reference proteome</keyword>
<sequence>MSPEALSELIFNIANTLVSEGKAGTLTADLIPPQAKFAVMRPKDRAHGDWASNAAMQLAKKAGMKPRDLAELFAAELTNADGIKSVEVAGPGFINITLDSASAAAVVDTVLEAGSDYGKNDHLSGKTLNLEFVSANPTGPIHIGGTRWAAVGDSMARVLEANGAKVVREYYFNDHGEQINRFAKSLVAAAHGEETPIDGYKGAYIDEIAKRVIDEANADGVDVLSLPRVDGGADQDGNPLGEGDSEQREEFRKRAVPMMFDEIQRSMKNFRVNFDVWFHENSLYSDGEVDQAIADLRARGDIFEKDGATWFESTKHGDDKDRVIIKSDGNYAYFAADIAYYRNKRHRETNPADVAIYMLGADHHGYIGRMMAMCEAFGDKPGENMQILIGQLVNVMKDGKAVRMSKRAGNVVTIDDLTDAIGVDASRYSLARTDYNSPVDIDLNLLSSHSNENPVYYVQYAHARSCNVDRNAAAAGITYEGADVSLLDTTADGEVLAALAQWPALLREAGDLRAPHRVAHYLEDLAATYHKWYNVERVVPMELTDPEARGEQADAIRIAKAPEPARAAARLKLNDAVKTVIAEGLDLLGVTAPDKM</sequence>
<proteinExistence type="inferred from homology"/>
<protein>
    <recommendedName>
        <fullName evidence="1">Arginine--tRNA ligase</fullName>
        <ecNumber evidence="1">6.1.1.19</ecNumber>
    </recommendedName>
    <alternativeName>
        <fullName evidence="1">Arginyl-tRNA synthetase</fullName>
        <shortName evidence="1">ArgRS</shortName>
    </alternativeName>
</protein>
<gene>
    <name evidence="1" type="primary">argS</name>
    <name type="ordered locus">BAD_1418</name>
</gene>
<dbReference type="EC" id="6.1.1.19" evidence="1"/>
<dbReference type="EMBL" id="AP009256">
    <property type="protein sequence ID" value="BAF40199.1"/>
    <property type="molecule type" value="Genomic_DNA"/>
</dbReference>
<dbReference type="RefSeq" id="WP_011743711.1">
    <property type="nucleotide sequence ID" value="NC_008618.1"/>
</dbReference>
<dbReference type="SMR" id="A1A3B6"/>
<dbReference type="STRING" id="367928.BAD_1418"/>
<dbReference type="PaxDb" id="1680-BADO_1613"/>
<dbReference type="GeneID" id="4557397"/>
<dbReference type="KEGG" id="bad:BAD_1418"/>
<dbReference type="HOGENOM" id="CLU_006406_0_1_11"/>
<dbReference type="Proteomes" id="UP000008702">
    <property type="component" value="Chromosome"/>
</dbReference>
<dbReference type="GO" id="GO:0005737">
    <property type="term" value="C:cytoplasm"/>
    <property type="evidence" value="ECO:0007669"/>
    <property type="project" value="UniProtKB-SubCell"/>
</dbReference>
<dbReference type="GO" id="GO:0004814">
    <property type="term" value="F:arginine-tRNA ligase activity"/>
    <property type="evidence" value="ECO:0007669"/>
    <property type="project" value="UniProtKB-UniRule"/>
</dbReference>
<dbReference type="GO" id="GO:0005524">
    <property type="term" value="F:ATP binding"/>
    <property type="evidence" value="ECO:0007669"/>
    <property type="project" value="UniProtKB-UniRule"/>
</dbReference>
<dbReference type="GO" id="GO:0006420">
    <property type="term" value="P:arginyl-tRNA aminoacylation"/>
    <property type="evidence" value="ECO:0007669"/>
    <property type="project" value="UniProtKB-UniRule"/>
</dbReference>
<dbReference type="CDD" id="cd00671">
    <property type="entry name" value="ArgRS_core"/>
    <property type="match status" value="1"/>
</dbReference>
<dbReference type="FunFam" id="3.40.50.620:FF:000062">
    <property type="entry name" value="Arginine--tRNA ligase"/>
    <property type="match status" value="1"/>
</dbReference>
<dbReference type="Gene3D" id="3.30.1360.70">
    <property type="entry name" value="Arginyl tRNA synthetase N-terminal domain"/>
    <property type="match status" value="1"/>
</dbReference>
<dbReference type="Gene3D" id="3.40.50.620">
    <property type="entry name" value="HUPs"/>
    <property type="match status" value="1"/>
</dbReference>
<dbReference type="Gene3D" id="1.10.730.10">
    <property type="entry name" value="Isoleucyl-tRNA Synthetase, Domain 1"/>
    <property type="match status" value="1"/>
</dbReference>
<dbReference type="HAMAP" id="MF_00123">
    <property type="entry name" value="Arg_tRNA_synth"/>
    <property type="match status" value="1"/>
</dbReference>
<dbReference type="InterPro" id="IPR001412">
    <property type="entry name" value="aa-tRNA-synth_I_CS"/>
</dbReference>
<dbReference type="InterPro" id="IPR001278">
    <property type="entry name" value="Arg-tRNA-ligase"/>
</dbReference>
<dbReference type="InterPro" id="IPR005148">
    <property type="entry name" value="Arg-tRNA-synth_N"/>
</dbReference>
<dbReference type="InterPro" id="IPR036695">
    <property type="entry name" value="Arg-tRNA-synth_N_sf"/>
</dbReference>
<dbReference type="InterPro" id="IPR035684">
    <property type="entry name" value="ArgRS_core"/>
</dbReference>
<dbReference type="InterPro" id="IPR008909">
    <property type="entry name" value="DALR_anticod-bd"/>
</dbReference>
<dbReference type="InterPro" id="IPR014729">
    <property type="entry name" value="Rossmann-like_a/b/a_fold"/>
</dbReference>
<dbReference type="InterPro" id="IPR009080">
    <property type="entry name" value="tRNAsynth_Ia_anticodon-bd"/>
</dbReference>
<dbReference type="NCBIfam" id="TIGR00456">
    <property type="entry name" value="argS"/>
    <property type="match status" value="1"/>
</dbReference>
<dbReference type="PANTHER" id="PTHR11956:SF5">
    <property type="entry name" value="ARGININE--TRNA LIGASE, CYTOPLASMIC"/>
    <property type="match status" value="1"/>
</dbReference>
<dbReference type="PANTHER" id="PTHR11956">
    <property type="entry name" value="ARGINYL-TRNA SYNTHETASE"/>
    <property type="match status" value="1"/>
</dbReference>
<dbReference type="Pfam" id="PF03485">
    <property type="entry name" value="Arg_tRNA_synt_N"/>
    <property type="match status" value="1"/>
</dbReference>
<dbReference type="Pfam" id="PF05746">
    <property type="entry name" value="DALR_1"/>
    <property type="match status" value="1"/>
</dbReference>
<dbReference type="Pfam" id="PF00750">
    <property type="entry name" value="tRNA-synt_1d"/>
    <property type="match status" value="1"/>
</dbReference>
<dbReference type="PRINTS" id="PR01038">
    <property type="entry name" value="TRNASYNTHARG"/>
</dbReference>
<dbReference type="SMART" id="SM01016">
    <property type="entry name" value="Arg_tRNA_synt_N"/>
    <property type="match status" value="1"/>
</dbReference>
<dbReference type="SMART" id="SM00836">
    <property type="entry name" value="DALR_1"/>
    <property type="match status" value="1"/>
</dbReference>
<dbReference type="SUPFAM" id="SSF47323">
    <property type="entry name" value="Anticodon-binding domain of a subclass of class I aminoacyl-tRNA synthetases"/>
    <property type="match status" value="1"/>
</dbReference>
<dbReference type="SUPFAM" id="SSF55190">
    <property type="entry name" value="Arginyl-tRNA synthetase (ArgRS), N-terminal 'additional' domain"/>
    <property type="match status" value="1"/>
</dbReference>
<dbReference type="SUPFAM" id="SSF52374">
    <property type="entry name" value="Nucleotidylyl transferase"/>
    <property type="match status" value="1"/>
</dbReference>
<dbReference type="PROSITE" id="PS00178">
    <property type="entry name" value="AA_TRNA_LIGASE_I"/>
    <property type="match status" value="1"/>
</dbReference>
<organism>
    <name type="scientific">Bifidobacterium adolescentis (strain ATCC 15703 / DSM 20083 / NCTC 11814 / E194a)</name>
    <dbReference type="NCBI Taxonomy" id="367928"/>
    <lineage>
        <taxon>Bacteria</taxon>
        <taxon>Bacillati</taxon>
        <taxon>Actinomycetota</taxon>
        <taxon>Actinomycetes</taxon>
        <taxon>Bifidobacteriales</taxon>
        <taxon>Bifidobacteriaceae</taxon>
        <taxon>Bifidobacterium</taxon>
    </lineage>
</organism>